<accession>Q9FLE2</accession>
<reference key="1">
    <citation type="journal article" date="1998" name="DNA Res.">
        <title>Structural analysis of Arabidopsis thaliana chromosome 5. IV. Sequence features of the regions of 1,456,315 bp covered by nineteen physically assigned P1 and TAC clones.</title>
        <authorList>
            <person name="Sato S."/>
            <person name="Kaneko T."/>
            <person name="Kotani H."/>
            <person name="Nakamura Y."/>
            <person name="Asamizu E."/>
            <person name="Miyajima N."/>
            <person name="Tabata S."/>
        </authorList>
    </citation>
    <scope>NUCLEOTIDE SEQUENCE [LARGE SCALE GENOMIC DNA]</scope>
    <source>
        <strain>cv. Columbia</strain>
    </source>
</reference>
<reference key="2">
    <citation type="journal article" date="2017" name="Plant J.">
        <title>Araport11: a complete reannotation of the Arabidopsis thaliana reference genome.</title>
        <authorList>
            <person name="Cheng C.Y."/>
            <person name="Krishnakumar V."/>
            <person name="Chan A.P."/>
            <person name="Thibaud-Nissen F."/>
            <person name="Schobel S."/>
            <person name="Town C.D."/>
        </authorList>
    </citation>
    <scope>GENOME REANNOTATION</scope>
    <source>
        <strain>cv. Columbia</strain>
    </source>
</reference>
<reference key="3">
    <citation type="submission" date="2005-03" db="EMBL/GenBank/DDBJ databases">
        <authorList>
            <person name="Underwood B.A."/>
            <person name="Xiao Y."/>
            <person name="Moskal W."/>
            <person name="Monaghan E."/>
            <person name="Wang W."/>
            <person name="Redman J."/>
            <person name="Wu H.C."/>
            <person name="Utterback T."/>
            <person name="Town C.D."/>
        </authorList>
    </citation>
    <scope>NUCLEOTIDE SEQUENCE [LARGE SCALE MRNA]</scope>
    <source>
        <strain>cv. Columbia</strain>
    </source>
</reference>
<reference key="4">
    <citation type="journal article" date="2008" name="BMC Genomics">
        <title>Arabidopsis mRNA polyadenylation machinery: comprehensive analysis of protein-protein interactions and gene expression profiling.</title>
        <authorList>
            <person name="Hunt A.G."/>
            <person name="Xu R."/>
            <person name="Addepalli B."/>
            <person name="Rao S."/>
            <person name="Forbes K.P."/>
            <person name="Meeks L.R."/>
            <person name="Xing D."/>
            <person name="Mo M."/>
            <person name="Zhao H."/>
            <person name="Bandyopadhyay A."/>
            <person name="Dampanaboina L."/>
            <person name="Marion A."/>
            <person name="Von Lanken C."/>
            <person name="Li Q.Q."/>
        </authorList>
    </citation>
    <scope>INTERACTION WITH PCFS1; FIPS3 AND CPSF30</scope>
    <scope>GENE FAMILY</scope>
    <scope>NOMENCLATURE</scope>
</reference>
<gene>
    <name evidence="4" type="primary">CLPS5</name>
    <name evidence="5" type="ordered locus">At5g39930</name>
    <name evidence="6" type="ORF">MYH19.12</name>
</gene>
<organism evidence="7">
    <name type="scientific">Arabidopsis thaliana</name>
    <name type="common">Mouse-ear cress</name>
    <dbReference type="NCBI Taxonomy" id="3702"/>
    <lineage>
        <taxon>Eukaryota</taxon>
        <taxon>Viridiplantae</taxon>
        <taxon>Streptophyta</taxon>
        <taxon>Embryophyta</taxon>
        <taxon>Tracheophyta</taxon>
        <taxon>Spermatophyta</taxon>
        <taxon>Magnoliopsida</taxon>
        <taxon>eudicotyledons</taxon>
        <taxon>Gunneridae</taxon>
        <taxon>Pentapetalae</taxon>
        <taxon>rosids</taxon>
        <taxon>malvids</taxon>
        <taxon>Brassicales</taxon>
        <taxon>Brassicaceae</taxon>
        <taxon>Camelineae</taxon>
        <taxon>Arabidopsis</taxon>
    </lineage>
</organism>
<comment type="function">
    <text evidence="2">Required for endonucleolytic cleavage during polyadenylation-dependent pre-mRNA 3'-end formation.</text>
</comment>
<comment type="subunit">
    <text evidence="3">Forms a complex with cleavage and polyadenylation specificity factor (CPSF) subunits PCFS1, FIPS3 and CPSF30.</text>
</comment>
<comment type="subcellular location">
    <subcellularLocation>
        <location evidence="1 2">Nucleus</location>
    </subcellularLocation>
</comment>
<comment type="similarity">
    <text evidence="2">Belongs to the Clp1 family. Clp1 subfamily.</text>
</comment>
<evidence type="ECO:0000250" key="1">
    <source>
        <dbReference type="UniProtKB" id="Q9SR06"/>
    </source>
</evidence>
<evidence type="ECO:0000255" key="2">
    <source>
        <dbReference type="HAMAP-Rule" id="MF_03035"/>
    </source>
</evidence>
<evidence type="ECO:0000269" key="3">
    <source>
    </source>
</evidence>
<evidence type="ECO:0000303" key="4">
    <source>
    </source>
</evidence>
<evidence type="ECO:0000312" key="5">
    <source>
        <dbReference type="Araport" id="AT5G39930"/>
    </source>
</evidence>
<evidence type="ECO:0000312" key="6">
    <source>
        <dbReference type="EMBL" id="BAB10217.1"/>
    </source>
</evidence>
<evidence type="ECO:0000312" key="7">
    <source>
        <dbReference type="Proteomes" id="UP000006548"/>
    </source>
</evidence>
<keyword id="KW-0067">ATP-binding</keyword>
<keyword id="KW-0507">mRNA processing</keyword>
<keyword id="KW-0547">Nucleotide-binding</keyword>
<keyword id="KW-0539">Nucleus</keyword>
<keyword id="KW-1185">Reference proteome</keyword>
<name>CLP5_ARATH</name>
<protein>
    <recommendedName>
        <fullName evidence="2">Protein CLP1 homolog 5</fullName>
    </recommendedName>
    <alternativeName>
        <fullName>CLP-like protein 5</fullName>
    </alternativeName>
    <alternativeName>
        <fullName>Protein CLP-SIMILAR PROTEIN 5</fullName>
    </alternativeName>
</protein>
<feature type="chain" id="PRO_0000431352" description="Protein CLP1 homolog 5">
    <location>
        <begin position="1"/>
        <end position="424"/>
    </location>
</feature>
<feature type="binding site" evidence="2">
    <location>
        <position position="16"/>
    </location>
    <ligand>
        <name>ATP</name>
        <dbReference type="ChEBI" id="CHEBI:30616"/>
    </ligand>
</feature>
<feature type="binding site" evidence="2">
    <location>
        <position position="56"/>
    </location>
    <ligand>
        <name>ATP</name>
        <dbReference type="ChEBI" id="CHEBI:30616"/>
    </ligand>
</feature>
<feature type="binding site" evidence="2">
    <location>
        <begin position="124"/>
        <end position="129"/>
    </location>
    <ligand>
        <name>ATP</name>
        <dbReference type="ChEBI" id="CHEBI:30616"/>
    </ligand>
</feature>
<sequence>MFGPQIRRVKLEKQSELRIELQPTSPLRLRLLDGKAEIFGYELPHEVWITFPPLMTFAVFTWYGATIEIDGITGNEYISCETPMVNYLGLHNSLQVQRHRVTSSTRDSASSQEGPRVIIVGDIDSGKSTLAKMLLNWAVKDGWKPTFVDLNVGQSSITIPGTIAAAPIKMLVDPVEGFPLDKALIHYFGLTNPSVNLRLYRTLVEELARELKEEFSANAESRASGMVIDTMGFIVREGYALLLHAIRTFNASLVIVVGQEEKLVYDLKKNLKFKKNLQVLNLEKSEGVFSRSSDFRKTLRNSNIQNYFYGVTNDLTVYTKTVKFSDVQVYRIGDFRVSGSTSAHQRGNDPLKITLVTIDEHLVNKVLAISYAIKPDQIISSIVAGFVCIKNVDISEERITYVSPSAAELPSKILILGTLTWHVT</sequence>
<proteinExistence type="evidence at protein level"/>
<dbReference type="EMBL" id="AB010077">
    <property type="protein sequence ID" value="BAB10217.1"/>
    <property type="molecule type" value="Genomic_DNA"/>
</dbReference>
<dbReference type="EMBL" id="CP002688">
    <property type="protein sequence ID" value="AED94492.1"/>
    <property type="molecule type" value="Genomic_DNA"/>
</dbReference>
<dbReference type="EMBL" id="AY954872">
    <property type="protein sequence ID" value="AAX55198.1"/>
    <property type="molecule type" value="mRNA"/>
</dbReference>
<dbReference type="RefSeq" id="NP_198809.2">
    <property type="nucleotide sequence ID" value="NM_123356.3"/>
</dbReference>
<dbReference type="SMR" id="Q9FLE2"/>
<dbReference type="BioGRID" id="19241">
    <property type="interactions" value="1"/>
</dbReference>
<dbReference type="FunCoup" id="Q9FLE2">
    <property type="interactions" value="2967"/>
</dbReference>
<dbReference type="IntAct" id="Q9FLE2">
    <property type="interactions" value="1"/>
</dbReference>
<dbReference type="STRING" id="3702.Q9FLE2"/>
<dbReference type="PaxDb" id="3702-AT5G39930.1"/>
<dbReference type="ProteomicsDB" id="246653"/>
<dbReference type="EnsemblPlants" id="AT5G39930.1">
    <property type="protein sequence ID" value="AT5G39930.1"/>
    <property type="gene ID" value="AT5G39930"/>
</dbReference>
<dbReference type="GeneID" id="833990"/>
<dbReference type="Gramene" id="AT5G39930.1">
    <property type="protein sequence ID" value="AT5G39930.1"/>
    <property type="gene ID" value="AT5G39930"/>
</dbReference>
<dbReference type="KEGG" id="ath:AT5G39930"/>
<dbReference type="Araport" id="AT5G39930"/>
<dbReference type="TAIR" id="AT5G39930">
    <property type="gene designation" value="CLPS5"/>
</dbReference>
<dbReference type="eggNOG" id="KOG2749">
    <property type="taxonomic scope" value="Eukaryota"/>
</dbReference>
<dbReference type="HOGENOM" id="CLU_018195_1_0_1"/>
<dbReference type="InParanoid" id="Q9FLE2"/>
<dbReference type="OMA" id="WITFPPL"/>
<dbReference type="PhylomeDB" id="Q9FLE2"/>
<dbReference type="PRO" id="PR:Q9FLE2"/>
<dbReference type="Proteomes" id="UP000006548">
    <property type="component" value="Chromosome 5"/>
</dbReference>
<dbReference type="ExpressionAtlas" id="Q9FLE2">
    <property type="expression patterns" value="baseline and differential"/>
</dbReference>
<dbReference type="GO" id="GO:0005849">
    <property type="term" value="C:mRNA cleavage factor complex"/>
    <property type="evidence" value="ECO:0007669"/>
    <property type="project" value="InterPro"/>
</dbReference>
<dbReference type="GO" id="GO:0005524">
    <property type="term" value="F:ATP binding"/>
    <property type="evidence" value="ECO:0007669"/>
    <property type="project" value="UniProtKB-UniRule"/>
</dbReference>
<dbReference type="GO" id="GO:0051731">
    <property type="term" value="F:polynucleotide 5'-hydroxyl-kinase activity"/>
    <property type="evidence" value="ECO:0007669"/>
    <property type="project" value="InterPro"/>
</dbReference>
<dbReference type="GO" id="GO:0031124">
    <property type="term" value="P:mRNA 3'-end processing"/>
    <property type="evidence" value="ECO:0007669"/>
    <property type="project" value="UniProtKB-UniRule"/>
</dbReference>
<dbReference type="FunFam" id="2.40.30.330:FF:000002">
    <property type="entry name" value="Protein CLP1 homolog"/>
    <property type="match status" value="1"/>
</dbReference>
<dbReference type="FunFam" id="2.60.120.1030:FF:000001">
    <property type="entry name" value="Protein CLP1 homolog 5"/>
    <property type="match status" value="1"/>
</dbReference>
<dbReference type="Gene3D" id="2.60.120.1030">
    <property type="entry name" value="Clp1, DNA binding domain"/>
    <property type="match status" value="1"/>
</dbReference>
<dbReference type="Gene3D" id="3.40.50.300">
    <property type="entry name" value="P-loop containing nucleotide triphosphate hydrolases"/>
    <property type="match status" value="1"/>
</dbReference>
<dbReference type="Gene3D" id="2.40.30.330">
    <property type="entry name" value="Pre-mRNA cleavage complex subunit Clp1, C-terminal domain"/>
    <property type="match status" value="1"/>
</dbReference>
<dbReference type="HAMAP" id="MF_03035">
    <property type="entry name" value="Clp1"/>
    <property type="match status" value="1"/>
</dbReference>
<dbReference type="InterPro" id="IPR028606">
    <property type="entry name" value="Clp1"/>
</dbReference>
<dbReference type="InterPro" id="IPR045116">
    <property type="entry name" value="Clp1/Grc3"/>
</dbReference>
<dbReference type="InterPro" id="IPR010655">
    <property type="entry name" value="Clp1_C"/>
</dbReference>
<dbReference type="InterPro" id="IPR038238">
    <property type="entry name" value="Clp1_C_sf"/>
</dbReference>
<dbReference type="InterPro" id="IPR032324">
    <property type="entry name" value="Clp1_N"/>
</dbReference>
<dbReference type="InterPro" id="IPR038239">
    <property type="entry name" value="Clp1_N_sf"/>
</dbReference>
<dbReference type="InterPro" id="IPR032319">
    <property type="entry name" value="CLP1_P"/>
</dbReference>
<dbReference type="InterPro" id="IPR027417">
    <property type="entry name" value="P-loop_NTPase"/>
</dbReference>
<dbReference type="PANTHER" id="PTHR12755">
    <property type="entry name" value="CLEAVAGE/POLYADENYLATION FACTOR IA SUBUNIT CLP1P"/>
    <property type="match status" value="1"/>
</dbReference>
<dbReference type="PANTHER" id="PTHR12755:SF19">
    <property type="entry name" value="PROTEIN CLP1 HOMOLOG 5"/>
    <property type="match status" value="1"/>
</dbReference>
<dbReference type="Pfam" id="PF06807">
    <property type="entry name" value="Clp1"/>
    <property type="match status" value="1"/>
</dbReference>
<dbReference type="Pfam" id="PF16573">
    <property type="entry name" value="CLP1_N"/>
    <property type="match status" value="1"/>
</dbReference>
<dbReference type="Pfam" id="PF16575">
    <property type="entry name" value="CLP1_P"/>
    <property type="match status" value="1"/>
</dbReference>
<dbReference type="SUPFAM" id="SSF52540">
    <property type="entry name" value="P-loop containing nucleoside triphosphate hydrolases"/>
    <property type="match status" value="1"/>
</dbReference>